<keyword id="KW-0472">Membrane</keyword>
<keyword id="KW-0496">Mitochondrion</keyword>
<keyword id="KW-1000">Mitochondrion outer membrane</keyword>
<keyword id="KW-1185">Reference proteome</keyword>
<feature type="chain" id="PRO_0000341572" description="Mitochondrial fission regulator 1-like-B">
    <location>
        <begin position="1"/>
        <end position="320"/>
    </location>
</feature>
<feature type="region of interest" description="Disordered" evidence="2">
    <location>
        <begin position="1"/>
        <end position="37"/>
    </location>
</feature>
<feature type="compositionally biased region" description="Basic and acidic residues" evidence="2">
    <location>
        <begin position="9"/>
        <end position="30"/>
    </location>
</feature>
<comment type="function">
    <text evidence="1">Mitochondrial protein required for adaptation of miochondrial dynamics to metabolic changes. Regulates mitochondrial morphology at steady state and mediates AMPK-dependent stress-induced mitochondrial fragmentation via the control of OPA1 levels.</text>
</comment>
<comment type="subcellular location">
    <subcellularLocation>
        <location evidence="1">Mitochondrion outer membrane</location>
        <topology evidence="1">Peripheral membrane protein</topology>
        <orientation evidence="1">Cytoplasmic side</orientation>
    </subcellularLocation>
</comment>
<comment type="similarity">
    <text evidence="3">Belongs to the MTFR1 family.</text>
</comment>
<gene>
    <name type="primary">mtfr1l-b</name>
    <name type="synonym">fam54b-b</name>
</gene>
<dbReference type="EMBL" id="BC097729">
    <property type="protein sequence ID" value="AAH97729.1"/>
    <property type="molecule type" value="mRNA"/>
</dbReference>
<dbReference type="RefSeq" id="NP_001089495.1">
    <property type="nucleotide sequence ID" value="NM_001096026.1"/>
</dbReference>
<dbReference type="BioGRID" id="592328">
    <property type="interactions" value="1"/>
</dbReference>
<dbReference type="IntAct" id="Q4V7T5">
    <property type="interactions" value="1"/>
</dbReference>
<dbReference type="DNASU" id="734547"/>
<dbReference type="GeneID" id="734547"/>
<dbReference type="KEGG" id="xla:734547"/>
<dbReference type="AGR" id="Xenbase:XB-GENE-6255893"/>
<dbReference type="CTD" id="734547"/>
<dbReference type="Xenbase" id="XB-GENE-6255893">
    <property type="gene designation" value="mtfr1l.S"/>
</dbReference>
<dbReference type="OrthoDB" id="9930891at2759"/>
<dbReference type="Proteomes" id="UP000186698">
    <property type="component" value="Chromosome 2S"/>
</dbReference>
<dbReference type="Bgee" id="734547">
    <property type="expression patterns" value="Expressed in neurula embryo and 19 other cell types or tissues"/>
</dbReference>
<dbReference type="GO" id="GO:0005741">
    <property type="term" value="C:mitochondrial outer membrane"/>
    <property type="evidence" value="ECO:0007669"/>
    <property type="project" value="UniProtKB-SubCell"/>
</dbReference>
<dbReference type="GO" id="GO:0005739">
    <property type="term" value="C:mitochondrion"/>
    <property type="evidence" value="ECO:0000318"/>
    <property type="project" value="GO_Central"/>
</dbReference>
<dbReference type="GO" id="GO:0009060">
    <property type="term" value="P:aerobic respiration"/>
    <property type="evidence" value="ECO:0000318"/>
    <property type="project" value="GO_Central"/>
</dbReference>
<dbReference type="GO" id="GO:0000266">
    <property type="term" value="P:mitochondrial fission"/>
    <property type="evidence" value="ECO:0000318"/>
    <property type="project" value="GO_Central"/>
</dbReference>
<dbReference type="InterPro" id="IPR007972">
    <property type="entry name" value="Mtfr1"/>
</dbReference>
<dbReference type="PANTHER" id="PTHR14215:SF3">
    <property type="entry name" value="MITOCHONDRIAL FISSION REGULATOR 1-LIKE"/>
    <property type="match status" value="1"/>
</dbReference>
<dbReference type="PANTHER" id="PTHR14215">
    <property type="entry name" value="PROTEIN OF UNKNOWN FUNCTION DUF729"/>
    <property type="match status" value="1"/>
</dbReference>
<dbReference type="Pfam" id="PF05308">
    <property type="entry name" value="Mito_fiss_reg"/>
    <property type="match status" value="1"/>
</dbReference>
<sequence>MASLGAAAEPERSLFGKDGAEACESPEGRRSGRRKRTKIVPVWENKPCGSSRSLVRRIGSHLPLKPCTRACFEALPSPANLYLTDTPMVPTLADIKWIAADDDETYARVRSDTRPLKHKWRPSPLLVMHRNSSVPNLKMKEEKMFCLKKPGLSLNKSSDIQEELSILRSQIARIVAGDSVSSCLGSDSIPVNVDLEATLPDYGPSYQSTTSFVISDITEEDELDVSEYSSASLVDSTISLQRQLETNMSDDDEDSLCLSKSNSFADMMGILKDIHKMKLNRDWSNRNQCLHKEEDPVNLISEVLKQKFALCDPDNVKTND</sequence>
<proteinExistence type="evidence at transcript level"/>
<evidence type="ECO:0000250" key="1">
    <source>
        <dbReference type="UniProtKB" id="Q9H019"/>
    </source>
</evidence>
<evidence type="ECO:0000256" key="2">
    <source>
        <dbReference type="SAM" id="MobiDB-lite"/>
    </source>
</evidence>
<evidence type="ECO:0000305" key="3"/>
<organism>
    <name type="scientific">Xenopus laevis</name>
    <name type="common">African clawed frog</name>
    <dbReference type="NCBI Taxonomy" id="8355"/>
    <lineage>
        <taxon>Eukaryota</taxon>
        <taxon>Metazoa</taxon>
        <taxon>Chordata</taxon>
        <taxon>Craniata</taxon>
        <taxon>Vertebrata</taxon>
        <taxon>Euteleostomi</taxon>
        <taxon>Amphibia</taxon>
        <taxon>Batrachia</taxon>
        <taxon>Anura</taxon>
        <taxon>Pipoidea</taxon>
        <taxon>Pipidae</taxon>
        <taxon>Xenopodinae</taxon>
        <taxon>Xenopus</taxon>
        <taxon>Xenopus</taxon>
    </lineage>
</organism>
<name>MF1LB_XENLA</name>
<protein>
    <recommendedName>
        <fullName>Mitochondrial fission regulator 1-like-B</fullName>
    </recommendedName>
</protein>
<reference key="1">
    <citation type="submission" date="2005-06" db="EMBL/GenBank/DDBJ databases">
        <authorList>
            <consortium name="NIH - Xenopus Gene Collection (XGC) project"/>
        </authorList>
    </citation>
    <scope>NUCLEOTIDE SEQUENCE [LARGE SCALE MRNA]</scope>
    <source>
        <tissue>Embryo</tissue>
    </source>
</reference>
<accession>Q4V7T5</accession>